<name>TVA30_HUMAN</name>
<keyword id="KW-0002">3D-structure</keyword>
<keyword id="KW-1064">Adaptive immunity</keyword>
<keyword id="KW-1003">Cell membrane</keyword>
<keyword id="KW-1015">Disulfide bond</keyword>
<keyword id="KW-0325">Glycoprotein</keyword>
<keyword id="KW-0391">Immunity</keyword>
<keyword id="KW-0393">Immunoglobulin domain</keyword>
<keyword id="KW-0472">Membrane</keyword>
<keyword id="KW-0675">Receptor</keyword>
<keyword id="KW-1185">Reference proteome</keyword>
<keyword id="KW-0732">Signal</keyword>
<keyword id="KW-1279">T cell receptor</keyword>
<reference key="1">
    <citation type="journal article" date="2003" name="Nature">
        <title>The DNA sequence and analysis of human chromosome 14.</title>
        <authorList>
            <person name="Heilig R."/>
            <person name="Eckenberg R."/>
            <person name="Petit J.-L."/>
            <person name="Fonknechten N."/>
            <person name="Da Silva C."/>
            <person name="Cattolico L."/>
            <person name="Levy M."/>
            <person name="Barbe V."/>
            <person name="De Berardinis V."/>
            <person name="Ureta-Vidal A."/>
            <person name="Pelletier E."/>
            <person name="Vico V."/>
            <person name="Anthouard V."/>
            <person name="Rowen L."/>
            <person name="Madan A."/>
            <person name="Qin S."/>
            <person name="Sun H."/>
            <person name="Du H."/>
            <person name="Pepin K."/>
            <person name="Artiguenave F."/>
            <person name="Robert C."/>
            <person name="Cruaud C."/>
            <person name="Bruels T."/>
            <person name="Jaillon O."/>
            <person name="Friedlander L."/>
            <person name="Samson G."/>
            <person name="Brottier P."/>
            <person name="Cure S."/>
            <person name="Segurens B."/>
            <person name="Aniere F."/>
            <person name="Samain S."/>
            <person name="Crespeau H."/>
            <person name="Abbasi N."/>
            <person name="Aiach N."/>
            <person name="Boscus D."/>
            <person name="Dickhoff R."/>
            <person name="Dors M."/>
            <person name="Dubois I."/>
            <person name="Friedman C."/>
            <person name="Gouyvenoux M."/>
            <person name="James R."/>
            <person name="Madan A."/>
            <person name="Mairey-Estrada B."/>
            <person name="Mangenot S."/>
            <person name="Martins N."/>
            <person name="Menard M."/>
            <person name="Oztas S."/>
            <person name="Ratcliffe A."/>
            <person name="Shaffer T."/>
            <person name="Trask B."/>
            <person name="Vacherie B."/>
            <person name="Bellemere C."/>
            <person name="Belser C."/>
            <person name="Besnard-Gonnet M."/>
            <person name="Bartol-Mavel D."/>
            <person name="Boutard M."/>
            <person name="Briez-Silla S."/>
            <person name="Combette S."/>
            <person name="Dufosse-Laurent V."/>
            <person name="Ferron C."/>
            <person name="Lechaplais C."/>
            <person name="Louesse C."/>
            <person name="Muselet D."/>
            <person name="Magdelenat G."/>
            <person name="Pateau E."/>
            <person name="Petit E."/>
            <person name="Sirvain-Trukniewicz P."/>
            <person name="Trybou A."/>
            <person name="Vega-Czarny N."/>
            <person name="Bataille E."/>
            <person name="Bluet E."/>
            <person name="Bordelais I."/>
            <person name="Dubois M."/>
            <person name="Dumont C."/>
            <person name="Guerin T."/>
            <person name="Haffray S."/>
            <person name="Hammadi R."/>
            <person name="Muanga J."/>
            <person name="Pellouin V."/>
            <person name="Robert D."/>
            <person name="Wunderle E."/>
            <person name="Gauguet G."/>
            <person name="Roy A."/>
            <person name="Sainte-Marthe L."/>
            <person name="Verdier J."/>
            <person name="Verdier-Discala C."/>
            <person name="Hillier L.W."/>
            <person name="Fulton L."/>
            <person name="McPherson J."/>
            <person name="Matsuda F."/>
            <person name="Wilson R."/>
            <person name="Scarpelli C."/>
            <person name="Gyapay G."/>
            <person name="Wincker P."/>
            <person name="Saurin W."/>
            <person name="Quetier F."/>
            <person name="Waterston R."/>
            <person name="Hood L."/>
            <person name="Weissenbach J."/>
        </authorList>
    </citation>
    <scope>NUCLEOTIDE SEQUENCE [LARGE SCALE GENOMIC DNA] (IMGT ALLELE TRAV30*01)</scope>
</reference>
<reference key="2">
    <citation type="book" date="2001" name="The T Cell Receptor FactsBook.">
        <title>The T Cell Receptor FactsBook.</title>
        <editorList>
            <person name="Lefranc M.P."/>
            <person name="Lefranc G."/>
        </editorList>
        <authorList>
            <person name="Lefranc M.P."/>
            <person name="Lefranc G."/>
        </authorList>
    </citation>
    <scope>NOMENCLATURE</scope>
</reference>
<reference key="3">
    <citation type="journal article" date="2004" name="Nat. Rev. Immunol.">
        <title>The many important facets of T-cell repertoire diversity.</title>
        <authorList>
            <person name="Nikolich-Zugich J."/>
            <person name="Slifka M.K."/>
            <person name="Messaoudi I."/>
        </authorList>
    </citation>
    <scope>REVIEW ON T CELL REPERTOIRE DIVERSITY</scope>
</reference>
<reference key="4">
    <citation type="journal article" date="2010" name="Cold Spring Harb. Perspect. Biol.">
        <title>Structural biology of the T-cell receptor: insights into receptor assembly, ligand recognition, and initiation of signaling.</title>
        <authorList>
            <person name="Wucherpfennig K.W."/>
            <person name="Gagnon E."/>
            <person name="Call M.J."/>
            <person name="Huseby E.S."/>
            <person name="Call M.E."/>
        </authorList>
    </citation>
    <scope>REVIEW ON T CELL RECEPTOR-CD3 COMPLEX ASSEMBLY</scope>
    <scope>SUBCELLULAR LOCATION</scope>
</reference>
<reference key="5">
    <citation type="journal article" date="2013" name="Nat. Rev. Immunol.">
        <title>T cell receptor signalling networks: branched, diversified and bounded.</title>
        <authorList>
            <person name="Brownlie R.J."/>
            <person name="Zamoyska R."/>
        </authorList>
    </citation>
    <scope>REVIEW ON T CELL RECEPTOR SIGNALING</scope>
</reference>
<reference key="6">
    <citation type="journal article" date="2014" name="Front. Immunol.">
        <title>Immunoglobulin and T Cell Receptor Genes: IMGT((R)) and the Birth and Rise of Immunoinformatics.</title>
        <authorList>
            <person name="Lefranc M.P."/>
        </authorList>
    </citation>
    <scope>NOMENCLATURE</scope>
</reference>
<reference key="7">
    <citation type="journal article" date="2015" name="Annu. Rev. Immunol.">
        <title>T cell antigen receptor recognition of antigen-presenting molecules.</title>
        <authorList>
            <person name="Rossjohn J."/>
            <person name="Gras S."/>
            <person name="Miles J.J."/>
            <person name="Turner S.J."/>
            <person name="Godfrey D.I."/>
            <person name="McCluskey J."/>
        </authorList>
    </citation>
    <scope>REVIEW ON FUNCTION</scope>
</reference>
<evidence type="ECO:0000255" key="1"/>
<evidence type="ECO:0000255" key="2">
    <source>
        <dbReference type="PROSITE-ProRule" id="PRU00114"/>
    </source>
</evidence>
<evidence type="ECO:0000303" key="3">
    <source>
    </source>
</evidence>
<evidence type="ECO:0000303" key="4">
    <source>
    </source>
</evidence>
<evidence type="ECO:0000303" key="5">
    <source>
    </source>
</evidence>
<evidence type="ECO:0000303" key="6">
    <source>
    </source>
</evidence>
<evidence type="ECO:0000303" key="7">
    <source>
    </source>
</evidence>
<evidence type="ECO:0000303" key="8">
    <source ref="2"/>
</evidence>
<evidence type="ECO:0000305" key="9"/>
<evidence type="ECO:0007829" key="10">
    <source>
        <dbReference type="PDB" id="5WKF"/>
    </source>
</evidence>
<proteinExistence type="evidence at protein level"/>
<gene>
    <name evidence="8" type="primary">TRAV30</name>
</gene>
<accession>A0A087WSZ9</accession>
<organism>
    <name type="scientific">Homo sapiens</name>
    <name type="common">Human</name>
    <dbReference type="NCBI Taxonomy" id="9606"/>
    <lineage>
        <taxon>Eukaryota</taxon>
        <taxon>Metazoa</taxon>
        <taxon>Chordata</taxon>
        <taxon>Craniata</taxon>
        <taxon>Vertebrata</taxon>
        <taxon>Euteleostomi</taxon>
        <taxon>Mammalia</taxon>
        <taxon>Eutheria</taxon>
        <taxon>Euarchontoglires</taxon>
        <taxon>Primates</taxon>
        <taxon>Haplorrhini</taxon>
        <taxon>Catarrhini</taxon>
        <taxon>Hominidae</taxon>
        <taxon>Homo</taxon>
    </lineage>
</organism>
<sequence>METLLKVLSGTLLWQLTWVRSQQPVQSPQAVILREGEDAVINCSSSKALYSVHWYRQKHGEAPVFLMILLKGGEQKGHDKISASFNEKKQQSSLYLTASQLSYSGTYFCGTE</sequence>
<feature type="signal peptide" evidence="1">
    <location>
        <begin position="1"/>
        <end position="21"/>
    </location>
</feature>
<feature type="chain" id="PRO_5001831890" description="T cell receptor alpha variable 30" evidence="1">
    <location>
        <begin position="22"/>
        <end position="112"/>
    </location>
</feature>
<feature type="domain" description="Ig-like" evidence="2">
    <location>
        <begin position="24"/>
        <end position="112" status="greater than"/>
    </location>
</feature>
<feature type="glycosylation site" description="N-linked (GlcNAc...) asparagine" evidence="1">
    <location>
        <position position="42"/>
    </location>
</feature>
<feature type="disulfide bond" evidence="2">
    <location>
        <begin position="43"/>
        <end position="109"/>
    </location>
</feature>
<feature type="non-terminal residue">
    <location>
        <position position="112"/>
    </location>
</feature>
<feature type="strand" evidence="10">
    <location>
        <begin position="25"/>
        <end position="27"/>
    </location>
</feature>
<feature type="strand" evidence="10">
    <location>
        <begin position="29"/>
        <end position="34"/>
    </location>
</feature>
<feature type="strand" evidence="10">
    <location>
        <begin position="39"/>
        <end position="44"/>
    </location>
</feature>
<feature type="strand" evidence="10">
    <location>
        <begin position="52"/>
        <end position="57"/>
    </location>
</feature>
<feature type="strand" evidence="10">
    <location>
        <begin position="64"/>
        <end position="70"/>
    </location>
</feature>
<feature type="strand" evidence="10">
    <location>
        <begin position="73"/>
        <end position="78"/>
    </location>
</feature>
<feature type="strand" evidence="10">
    <location>
        <begin position="81"/>
        <end position="86"/>
    </location>
</feature>
<feature type="turn" evidence="10">
    <location>
        <begin position="87"/>
        <end position="90"/>
    </location>
</feature>
<feature type="strand" evidence="10">
    <location>
        <begin position="91"/>
        <end position="96"/>
    </location>
</feature>
<feature type="helix" evidence="10">
    <location>
        <begin position="101"/>
        <end position="103"/>
    </location>
</feature>
<feature type="strand" evidence="10">
    <location>
        <begin position="105"/>
        <end position="110"/>
    </location>
</feature>
<dbReference type="EMBL" id="AC245470">
    <property type="status" value="NOT_ANNOTATED_CDS"/>
    <property type="molecule type" value="Genomic_DNA"/>
</dbReference>
<dbReference type="PDB" id="5WKF">
    <property type="method" value="X-ray"/>
    <property type="resolution" value="2.95 A"/>
    <property type="chains" value="D/I=23-110"/>
</dbReference>
<dbReference type="PDB" id="5WKH">
    <property type="method" value="X-ray"/>
    <property type="resolution" value="3.20 A"/>
    <property type="chains" value="D/I=23-110"/>
</dbReference>
<dbReference type="PDBsum" id="5WKF"/>
<dbReference type="PDBsum" id="5WKH"/>
<dbReference type="SMR" id="A0A087WSZ9"/>
<dbReference type="FunCoup" id="A0A087WSZ9">
    <property type="interactions" value="314"/>
</dbReference>
<dbReference type="IMGT_GENE-DB" id="TRAV30"/>
<dbReference type="GlyCosmos" id="A0A087WSZ9">
    <property type="glycosylation" value="1 site, No reported glycans"/>
</dbReference>
<dbReference type="GlyGen" id="A0A087WSZ9">
    <property type="glycosylation" value="1 site"/>
</dbReference>
<dbReference type="BioMuta" id="TRAV30"/>
<dbReference type="jPOST" id="A0A087WSZ9"/>
<dbReference type="Ensembl" id="ENST00000557168.1">
    <property type="protein sequence ID" value="ENSP00000451308.1"/>
    <property type="gene ID" value="ENSG00000259092.1"/>
</dbReference>
<dbReference type="UCSC" id="uc058zel.1">
    <property type="organism name" value="human"/>
</dbReference>
<dbReference type="AGR" id="HGNC:12129"/>
<dbReference type="GeneCards" id="TRAV30"/>
<dbReference type="HGNC" id="HGNC:12129">
    <property type="gene designation" value="TRAV30"/>
</dbReference>
<dbReference type="HPA" id="ENSG00000259092">
    <property type="expression patterns" value="Tissue enriched (lymphoid)"/>
</dbReference>
<dbReference type="neXtProt" id="NX_A0A087WSZ9"/>
<dbReference type="OpenTargets" id="ENSG00000259092"/>
<dbReference type="VEuPathDB" id="HostDB:ENSG00000259092"/>
<dbReference type="GeneTree" id="ENSGT00940000162840"/>
<dbReference type="HOGENOM" id="CLU_077975_8_3_1"/>
<dbReference type="InParanoid" id="A0A087WSZ9"/>
<dbReference type="OMA" id="YSRTYFC"/>
<dbReference type="OrthoDB" id="9803478at2759"/>
<dbReference type="PAN-GO" id="A0A087WSZ9">
    <property type="GO annotations" value="1 GO annotation based on evolutionary models"/>
</dbReference>
<dbReference type="ChiTaRS" id="TRAV30">
    <property type="organism name" value="human"/>
</dbReference>
<dbReference type="Pharos" id="A0A087WSZ9">
    <property type="development level" value="Tdark"/>
</dbReference>
<dbReference type="PRO" id="PR:A0A087WSZ9"/>
<dbReference type="Proteomes" id="UP000005640">
    <property type="component" value="Chromosome 14"/>
</dbReference>
<dbReference type="RNAct" id="A0A087WSZ9">
    <property type="molecule type" value="protein"/>
</dbReference>
<dbReference type="Bgee" id="ENSG00000259092">
    <property type="expression patterns" value="Expressed in metanephros cortex and 95 other cell types or tissues"/>
</dbReference>
<dbReference type="GO" id="GO:0042101">
    <property type="term" value="C:T cell receptor complex"/>
    <property type="evidence" value="ECO:0007669"/>
    <property type="project" value="UniProtKB-KW"/>
</dbReference>
<dbReference type="GO" id="GO:0002250">
    <property type="term" value="P:adaptive immune response"/>
    <property type="evidence" value="ECO:0007669"/>
    <property type="project" value="UniProtKB-KW"/>
</dbReference>
<dbReference type="GO" id="GO:0009617">
    <property type="term" value="P:response to bacterium"/>
    <property type="evidence" value="ECO:0000318"/>
    <property type="project" value="GO_Central"/>
</dbReference>
<dbReference type="Gene3D" id="2.60.40.10">
    <property type="entry name" value="Immunoglobulins"/>
    <property type="match status" value="1"/>
</dbReference>
<dbReference type="InterPro" id="IPR007110">
    <property type="entry name" value="Ig-like_dom"/>
</dbReference>
<dbReference type="InterPro" id="IPR036179">
    <property type="entry name" value="Ig-like_dom_sf"/>
</dbReference>
<dbReference type="InterPro" id="IPR013783">
    <property type="entry name" value="Ig-like_fold"/>
</dbReference>
<dbReference type="InterPro" id="IPR013106">
    <property type="entry name" value="Ig_V-set"/>
</dbReference>
<dbReference type="InterPro" id="IPR051896">
    <property type="entry name" value="TCR_alpha_variable"/>
</dbReference>
<dbReference type="PANTHER" id="PTHR19339:SF12">
    <property type="entry name" value="IG-LIKE DOMAIN-CONTAINING PROTEIN"/>
    <property type="match status" value="1"/>
</dbReference>
<dbReference type="PANTHER" id="PTHR19339">
    <property type="entry name" value="T CELL RECEPTOR ALPHA VARIABLE 39"/>
    <property type="match status" value="1"/>
</dbReference>
<dbReference type="Pfam" id="PF07686">
    <property type="entry name" value="V-set"/>
    <property type="match status" value="1"/>
</dbReference>
<dbReference type="SUPFAM" id="SSF48726">
    <property type="entry name" value="Immunoglobulin"/>
    <property type="match status" value="1"/>
</dbReference>
<dbReference type="PROSITE" id="PS50835">
    <property type="entry name" value="IG_LIKE"/>
    <property type="match status" value="1"/>
</dbReference>
<protein>
    <recommendedName>
        <fullName evidence="8">T cell receptor alpha variable 30</fullName>
    </recommendedName>
</protein>
<comment type="function">
    <text evidence="3 5 6 7">V region of the variable domain of T cell receptor (TR) alpha chain that participates in the antigen recognition (PubMed:24600447). Alpha-beta T cell receptors are antigen specific receptors which are essential to the immune response and are present on the cell surface of T lymphocytes. Recognize peptide-major histocompatibility (MH) (pMH) complexes that are displayed by antigen presenting cells (APC), a prerequisite for efficient T cell adaptive immunity against pathogens (PubMed:25493333). Binding of alpha-beta TR to pMH complex initiates TR-CD3 clustering on the cell surface and intracellular activation of LCK that phosphorylates the ITAM motifs of CD3G, CD3D, CD3E and CD247 enabling the recruitment of ZAP70. In turn ZAP70 phosphorylates LAT, which recruits numerous signaling molecules to form the LAT signalosome. The LAT signalosome propagates signal branching to three major signaling pathways, the calcium, the mitogen-activated protein kinase (MAPK) kinase and the nuclear factor NF-kappa-B (NF-kB) pathways, leading to the mobilization of transcription factors that are critical for gene expression and essential for T cell growth and differentiation (PubMed:23524462). The T cell repertoire is generated in the thymus, by V-(D)-J rearrangement. This repertoire is then shaped by intrathymic selection events to generate a peripheral T cell pool of self-MH restricted, non-autoaggressive T cells. Post-thymic interaction of alpha-beta TR with the pMH complexes shapes TR structural and functional avidity (PubMed:15040585).</text>
</comment>
<comment type="subunit">
    <text evidence="4">Alpha-beta TR is a heterodimer composed of an alpha and beta chain; disulfide-linked. The alpha-beta TR is associated with the transmembrane signaling CD3 coreceptor proteins to form the TR-CD3 (TcR or TCR). The assembly of alpha-beta TR heterodimers with CD3 occurs in the endoplasmic reticulum where a single alpha-beta TR heterodimer associates with one CD3D-CD3E heterodimer, one CD3G-CD3E heterodimer and one CD247 homodimer forming a stable octameric structure. CD3D-CD3E and CD3G-CD3E heterodimers preferentially associate with TR alpha and TR beta chains, respectively. The association of the CD247 homodimer is the last step of TcR assembly in the endoplasmic reticulum and is required for transport to the cell surface.</text>
</comment>
<comment type="subcellular location">
    <subcellularLocation>
        <location evidence="4">Cell membrane</location>
    </subcellularLocation>
</comment>
<comment type="polymorphism">
    <text evidence="9">There are several alleles. The sequence shown is that of IMGT allele TRAV30*01.</text>
</comment>